<gene>
    <name evidence="17" type="primary">let-23</name>
    <name evidence="17" type="synonym">kin-7</name>
    <name evidence="17" type="ORF">ZK1067.1</name>
</gene>
<protein>
    <recommendedName>
        <fullName>Receptor tyrosine-protein kinase let-23</fullName>
        <ecNumber>2.7.10.1</ecNumber>
    </recommendedName>
    <alternativeName>
        <fullName>Lethal protein 23</fullName>
    </alternativeName>
</protein>
<comment type="function">
    <text evidence="7 9 10 11 13 14 15">Tyrosine-protein kinase receptor which, upon binding ligand lin-3, activates 2 signaling cascades: the let-60/Ras and MAP kinase signaling pathway and the let-60-independent phospholipase C-mediated Ca(2+) signaling pathway. Each pathway regulates distinct functions. By activating let-60/Ras, regulates larval development, induction of vulva cell precursors during vulva development, male spicule formation and posterior development of the epidermis (PubMed:20230814, PubMed:2071015, PubMed:32053105, PubMed:8313880, PubMed:9491893). Probably by activating phospholipase plc-3 and inositol 1,4,5-trisphosphate receptor itr-1 signaling cascade downstream of ligand lin-3, plays a role in ovulation by promoting ovulatory gonadal sheath cell contractions (PubMed:15194811, PubMed:9491893). Probably by regulating neuronal transmission in ALA neurons, mediates, independently of let-60/Ras, the decrease in pharyngeal pumping and locomotion during the quiescent state that precedes each larval molt, downstream of lin-3 and upstream of plc-3 (PubMed:17891142).</text>
</comment>
<comment type="catalytic activity">
    <reaction evidence="4">
        <text>L-tyrosyl-[protein] + ATP = O-phospho-L-tyrosyl-[protein] + ADP + H(+)</text>
        <dbReference type="Rhea" id="RHEA:10596"/>
        <dbReference type="Rhea" id="RHEA-COMP:10136"/>
        <dbReference type="Rhea" id="RHEA-COMP:20101"/>
        <dbReference type="ChEBI" id="CHEBI:15378"/>
        <dbReference type="ChEBI" id="CHEBI:30616"/>
        <dbReference type="ChEBI" id="CHEBI:46858"/>
        <dbReference type="ChEBI" id="CHEBI:61978"/>
        <dbReference type="ChEBI" id="CHEBI:456216"/>
        <dbReference type="EC" id="2.7.10.1"/>
    </reaction>
</comment>
<comment type="subcellular location">
    <subcellularLocation>
        <location evidence="6 13">Apical cell membrane</location>
        <topology evidence="6">Single-pass type I membrane protein</topology>
    </subcellularLocation>
    <subcellularLocation>
        <location evidence="6 13">Basolateral cell membrane</location>
        <topology evidence="6">Single-pass type I membrane protein</topology>
    </subcellularLocation>
    <text evidence="6">Basolateral and apical membrane of cell junctions in epithelial vulval precursor cells.</text>
</comment>
<comment type="tissue specificity">
    <text evidence="6 9">Expressed in vulval precursor cells (at protein level) (PubMed:10359617). Expressed in ALA neurons, 2 ventral head neurons, a single neuron in the tail, pharyngeal-intestinal valve and posterior arcade epithelial cells (PubMed:17891142).</text>
</comment>
<comment type="developmental stage">
    <text evidence="6 13">Expressed during L2 and L3 larval stages (PubMed:10359617). Highly expressed in vulval precursor cells P6.p in late L2 and early L3 stage larvae (PubMed:32053105).</text>
</comment>
<comment type="disruption phenotype">
    <text evidence="7 9 11">Larval lethality, lack of vulva formation, infertility and lack of male spicule formation (PubMed:2071015). RNAi-mediated knockdown causes sterility, a small decrease in the peak rate of sheath cell contractions and a delay in the onset of ovulatory contractions (PubMed:15194811). Restores normal pharyngeal pumping rate in 30 percent of animals overexpressing lin-3 (PubMed:17891142).</text>
</comment>
<comment type="similarity">
    <text evidence="3">Belongs to the protein kinase superfamily. Tyr protein kinase family. EGF receptor subfamily.</text>
</comment>
<comment type="sequence caution" evidence="16">
    <conflict type="erroneous gene model prediction">
        <sequence resource="EMBL-CDS" id="BAA09729"/>
    </conflict>
</comment>
<accession>P24348</accession>
<organism>
    <name type="scientific">Caenorhabditis elegans</name>
    <dbReference type="NCBI Taxonomy" id="6239"/>
    <lineage>
        <taxon>Eukaryota</taxon>
        <taxon>Metazoa</taxon>
        <taxon>Ecdysozoa</taxon>
        <taxon>Nematoda</taxon>
        <taxon>Chromadorea</taxon>
        <taxon>Rhabditida</taxon>
        <taxon>Rhabditina</taxon>
        <taxon>Rhabditomorpha</taxon>
        <taxon>Rhabditoidea</taxon>
        <taxon>Rhabditidae</taxon>
        <taxon>Peloderinae</taxon>
        <taxon>Caenorhabditis</taxon>
    </lineage>
</organism>
<dbReference type="EC" id="2.7.10.1"/>
<dbReference type="EMBL" id="X57767">
    <property type="protein sequence ID" value="CAA40919.1"/>
    <property type="molecule type" value="mRNA"/>
</dbReference>
<dbReference type="EMBL" id="D63426">
    <property type="protein sequence ID" value="BAA09729.1"/>
    <property type="status" value="ALT_SEQ"/>
    <property type="molecule type" value="Genomic_DNA"/>
</dbReference>
<dbReference type="EMBL" id="BX284602">
    <property type="protein sequence ID" value="CAA93882.3"/>
    <property type="molecule type" value="Genomic_DNA"/>
</dbReference>
<dbReference type="PIR" id="E88257">
    <property type="entry name" value="E88257"/>
</dbReference>
<dbReference type="PIR" id="S70712">
    <property type="entry name" value="S70712"/>
</dbReference>
<dbReference type="RefSeq" id="NP_495962.2">
    <property type="nucleotide sequence ID" value="NM_063561.4"/>
</dbReference>
<dbReference type="PDB" id="5WNO">
    <property type="method" value="X-ray"/>
    <property type="resolution" value="2.39 A"/>
    <property type="chains" value="A=866-1191"/>
</dbReference>
<dbReference type="PDBsum" id="5WNO"/>
<dbReference type="SMR" id="P24348"/>
<dbReference type="BioGRID" id="39787">
    <property type="interactions" value="109"/>
</dbReference>
<dbReference type="DIP" id="DIP-1014N"/>
<dbReference type="FunCoup" id="P24348">
    <property type="interactions" value="2167"/>
</dbReference>
<dbReference type="IntAct" id="P24348">
    <property type="interactions" value="2"/>
</dbReference>
<dbReference type="MINT" id="P24348"/>
<dbReference type="STRING" id="6239.ZK1067.1d.1"/>
<dbReference type="GlyCosmos" id="P24348">
    <property type="glycosylation" value="8 sites, No reported glycans"/>
</dbReference>
<dbReference type="iPTMnet" id="P24348"/>
<dbReference type="PaxDb" id="6239-ZK1067.1c"/>
<dbReference type="EnsemblMetazoa" id="ZK1067.1a.1">
    <property type="protein sequence ID" value="ZK1067.1a.1"/>
    <property type="gene ID" value="WBGene00002299"/>
</dbReference>
<dbReference type="GeneID" id="174462"/>
<dbReference type="KEGG" id="cel:CELE_ZK1067.1"/>
<dbReference type="UCSC" id="ZK1067.1">
    <property type="organism name" value="c. elegans"/>
</dbReference>
<dbReference type="AGR" id="WB:WBGene00002299"/>
<dbReference type="CTD" id="174462"/>
<dbReference type="WormBase" id="ZK1067.1a">
    <property type="protein sequence ID" value="CE03840"/>
    <property type="gene ID" value="WBGene00002299"/>
    <property type="gene designation" value="let-23"/>
</dbReference>
<dbReference type="eggNOG" id="KOG1025">
    <property type="taxonomic scope" value="Eukaryota"/>
</dbReference>
<dbReference type="GeneTree" id="ENSGT00940000168382"/>
<dbReference type="InParanoid" id="P24348"/>
<dbReference type="OrthoDB" id="6219513at2759"/>
<dbReference type="PhylomeDB" id="P24348"/>
<dbReference type="BRENDA" id="2.7.10.1">
    <property type="organism ID" value="1045"/>
</dbReference>
<dbReference type="Reactome" id="R-CEL-1227986">
    <property type="pathway name" value="Signaling by ERBB2"/>
</dbReference>
<dbReference type="Reactome" id="R-CEL-1250196">
    <property type="pathway name" value="SHC1 events in ERBB2 signaling"/>
</dbReference>
<dbReference type="Reactome" id="R-CEL-1251985">
    <property type="pathway name" value="Nuclear signaling by ERBB4"/>
</dbReference>
<dbReference type="Reactome" id="R-CEL-1253288">
    <property type="pathway name" value="Downregulation of ERBB4 signaling"/>
</dbReference>
<dbReference type="Reactome" id="R-CEL-1257604">
    <property type="pathway name" value="PIP3 activates AKT signaling"/>
</dbReference>
<dbReference type="Reactome" id="R-CEL-177929">
    <property type="pathway name" value="Signaling by EGFR"/>
</dbReference>
<dbReference type="Reactome" id="R-CEL-179812">
    <property type="pathway name" value="GRB2 events in EGFR signaling"/>
</dbReference>
<dbReference type="Reactome" id="R-CEL-180292">
    <property type="pathway name" value="GAB1 signalosome"/>
</dbReference>
<dbReference type="Reactome" id="R-CEL-180336">
    <property type="pathway name" value="SHC1 events in EGFR signaling"/>
</dbReference>
<dbReference type="Reactome" id="R-CEL-182971">
    <property type="pathway name" value="EGFR downregulation"/>
</dbReference>
<dbReference type="Reactome" id="R-CEL-1963642">
    <property type="pathway name" value="PI3K events in ERBB2 signaling"/>
</dbReference>
<dbReference type="Reactome" id="R-CEL-2179392">
    <property type="pathway name" value="EGFR Transactivation by Gastrin"/>
</dbReference>
<dbReference type="Reactome" id="R-CEL-416572">
    <property type="pathway name" value="Sema4D induced cell migration and growth-cone collapse"/>
</dbReference>
<dbReference type="Reactome" id="R-CEL-445144">
    <property type="pathway name" value="Signal transduction by L1"/>
</dbReference>
<dbReference type="Reactome" id="R-CEL-5673001">
    <property type="pathway name" value="RAF/MAP kinase cascade"/>
</dbReference>
<dbReference type="Reactome" id="R-CEL-6785631">
    <property type="pathway name" value="ERBB2 Regulates Cell Motility"/>
</dbReference>
<dbReference type="Reactome" id="R-CEL-6811558">
    <property type="pathway name" value="PI5P, PP2A and IER3 Regulate PI3K/AKT Signaling"/>
</dbReference>
<dbReference type="Reactome" id="R-CEL-8847993">
    <property type="pathway name" value="ERBB2 Activates PTK6 Signaling"/>
</dbReference>
<dbReference type="Reactome" id="R-CEL-8856825">
    <property type="pathway name" value="Cargo recognition for clathrin-mediated endocytosis"/>
</dbReference>
<dbReference type="Reactome" id="R-CEL-8856828">
    <property type="pathway name" value="Clathrin-mediated endocytosis"/>
</dbReference>
<dbReference type="Reactome" id="R-CEL-8863795">
    <property type="pathway name" value="Downregulation of ERBB2 signaling"/>
</dbReference>
<dbReference type="Reactome" id="R-CEL-9009391">
    <property type="pathway name" value="Extra-nuclear estrogen signaling"/>
</dbReference>
<dbReference type="Reactome" id="R-CEL-9652282">
    <property type="pathway name" value="Drug-mediated inhibition of ERBB2 signaling"/>
</dbReference>
<dbReference type="SignaLink" id="P24348"/>
<dbReference type="PRO" id="PR:P24348"/>
<dbReference type="Proteomes" id="UP000001940">
    <property type="component" value="Chromosome II"/>
</dbReference>
<dbReference type="Bgee" id="WBGene00002299">
    <property type="expression patterns" value="Expressed in larva and 3 other cell types or tissues"/>
</dbReference>
<dbReference type="ExpressionAtlas" id="P24348">
    <property type="expression patterns" value="baseline and differential"/>
</dbReference>
<dbReference type="GO" id="GO:0016324">
    <property type="term" value="C:apical plasma membrane"/>
    <property type="evidence" value="ECO:0000314"/>
    <property type="project" value="WormBase"/>
</dbReference>
<dbReference type="GO" id="GO:0009925">
    <property type="term" value="C:basal plasma membrane"/>
    <property type="evidence" value="ECO:0000318"/>
    <property type="project" value="GO_Central"/>
</dbReference>
<dbReference type="GO" id="GO:0016323">
    <property type="term" value="C:basolateral plasma membrane"/>
    <property type="evidence" value="ECO:0000314"/>
    <property type="project" value="WormBase"/>
</dbReference>
<dbReference type="GO" id="GO:0005911">
    <property type="term" value="C:cell-cell junction"/>
    <property type="evidence" value="ECO:0000314"/>
    <property type="project" value="WormBase"/>
</dbReference>
<dbReference type="GO" id="GO:0016328">
    <property type="term" value="C:lateral plasma membrane"/>
    <property type="evidence" value="ECO:0000314"/>
    <property type="project" value="WormBase"/>
</dbReference>
<dbReference type="GO" id="GO:0005886">
    <property type="term" value="C:plasma membrane"/>
    <property type="evidence" value="ECO:0000318"/>
    <property type="project" value="GO_Central"/>
</dbReference>
<dbReference type="GO" id="GO:0043235">
    <property type="term" value="C:receptor complex"/>
    <property type="evidence" value="ECO:0000318"/>
    <property type="project" value="GO_Central"/>
</dbReference>
<dbReference type="GO" id="GO:0005524">
    <property type="term" value="F:ATP binding"/>
    <property type="evidence" value="ECO:0007669"/>
    <property type="project" value="UniProtKB-KW"/>
</dbReference>
<dbReference type="GO" id="GO:0005006">
    <property type="term" value="F:epidermal growth factor receptor activity"/>
    <property type="evidence" value="ECO:0000314"/>
    <property type="project" value="WormBase"/>
</dbReference>
<dbReference type="GO" id="GO:0008289">
    <property type="term" value="F:lipid binding"/>
    <property type="evidence" value="ECO:0000314"/>
    <property type="project" value="DisProt"/>
</dbReference>
<dbReference type="GO" id="GO:0140677">
    <property type="term" value="F:molecular function activator activity"/>
    <property type="evidence" value="ECO:0000314"/>
    <property type="project" value="DisProt"/>
</dbReference>
<dbReference type="GO" id="GO:0004714">
    <property type="term" value="F:transmembrane receptor protein tyrosine kinase activity"/>
    <property type="evidence" value="ECO:0000318"/>
    <property type="project" value="GO_Central"/>
</dbReference>
<dbReference type="GO" id="GO:0007173">
    <property type="term" value="P:epidermal growth factor receptor signaling pathway"/>
    <property type="evidence" value="ECO:0000314"/>
    <property type="project" value="WormBase"/>
</dbReference>
<dbReference type="GO" id="GO:0030539">
    <property type="term" value="P:male genitalia development"/>
    <property type="evidence" value="ECO:0000315"/>
    <property type="project" value="WormBase"/>
</dbReference>
<dbReference type="GO" id="GO:0043066">
    <property type="term" value="P:negative regulation of apoptotic process"/>
    <property type="evidence" value="ECO:0000318"/>
    <property type="project" value="GO_Central"/>
</dbReference>
<dbReference type="GO" id="GO:0002119">
    <property type="term" value="P:nematode larval development"/>
    <property type="evidence" value="ECO:0000315"/>
    <property type="project" value="WormBase"/>
</dbReference>
<dbReference type="GO" id="GO:0030182">
    <property type="term" value="P:neuron differentiation"/>
    <property type="evidence" value="ECO:0000318"/>
    <property type="project" value="GO_Central"/>
</dbReference>
<dbReference type="GO" id="GO:0030728">
    <property type="term" value="P:ovulation"/>
    <property type="evidence" value="ECO:0000315"/>
    <property type="project" value="WormBase"/>
</dbReference>
<dbReference type="GO" id="GO:0050679">
    <property type="term" value="P:positive regulation of epithelial cell proliferation"/>
    <property type="evidence" value="ECO:0000318"/>
    <property type="project" value="GO_Central"/>
</dbReference>
<dbReference type="GO" id="GO:0043410">
    <property type="term" value="P:positive regulation of MAPK cascade"/>
    <property type="evidence" value="ECO:0000318"/>
    <property type="project" value="GO_Central"/>
</dbReference>
<dbReference type="GO" id="GO:0032436">
    <property type="term" value="P:positive regulation of proteasomal ubiquitin-dependent protein catabolic process"/>
    <property type="evidence" value="ECO:0000315"/>
    <property type="project" value="UniProtKB"/>
</dbReference>
<dbReference type="GO" id="GO:0040026">
    <property type="term" value="P:positive regulation of vulval development"/>
    <property type="evidence" value="ECO:0000315"/>
    <property type="project" value="WormBase"/>
</dbReference>
<dbReference type="GO" id="GO:0006355">
    <property type="term" value="P:regulation of DNA-templated transcription"/>
    <property type="evidence" value="ECO:0000315"/>
    <property type="project" value="UniProtKB"/>
</dbReference>
<dbReference type="GO" id="GO:0030431">
    <property type="term" value="P:sleep"/>
    <property type="evidence" value="ECO:0000315"/>
    <property type="project" value="WormBase"/>
</dbReference>
<dbReference type="GO" id="GO:0060065">
    <property type="term" value="P:uterus development"/>
    <property type="evidence" value="ECO:0000315"/>
    <property type="project" value="UniProtKB"/>
</dbReference>
<dbReference type="GO" id="GO:0072327">
    <property type="term" value="P:vulval cell fate specification"/>
    <property type="evidence" value="ECO:0000315"/>
    <property type="project" value="UniProtKB"/>
</dbReference>
<dbReference type="CDD" id="cd00064">
    <property type="entry name" value="FU"/>
    <property type="match status" value="5"/>
</dbReference>
<dbReference type="DisProt" id="DP03068"/>
<dbReference type="FunFam" id="1.10.510.10:FF:000027">
    <property type="entry name" value="Receptor protein-tyrosine kinase"/>
    <property type="match status" value="1"/>
</dbReference>
<dbReference type="FunFam" id="2.10.220.10:FF:000065">
    <property type="entry name" value="Receptor protein-tyrosine kinase"/>
    <property type="match status" value="1"/>
</dbReference>
<dbReference type="FunFam" id="2.10.220.10:FF:000068">
    <property type="entry name" value="Receptor protein-tyrosine kinase"/>
    <property type="match status" value="1"/>
</dbReference>
<dbReference type="FunFam" id="3.80.20.20:FF:000021">
    <property type="entry name" value="Receptor protein-tyrosine kinase"/>
    <property type="match status" value="1"/>
</dbReference>
<dbReference type="FunFam" id="3.80.20.20:FF:000028">
    <property type="entry name" value="Receptor protein-tyrosine kinase"/>
    <property type="match status" value="1"/>
</dbReference>
<dbReference type="Gene3D" id="2.10.220.10">
    <property type="entry name" value="Hormone Receptor, Insulin-like Growth Factor Receptor 1, Chain A, domain 2"/>
    <property type="match status" value="4"/>
</dbReference>
<dbReference type="Gene3D" id="3.30.200.20">
    <property type="entry name" value="Phosphorylase Kinase, domain 1"/>
    <property type="match status" value="1"/>
</dbReference>
<dbReference type="Gene3D" id="3.80.20.20">
    <property type="entry name" value="Receptor L-domain"/>
    <property type="match status" value="2"/>
</dbReference>
<dbReference type="Gene3D" id="1.10.510.10">
    <property type="entry name" value="Transferase(Phosphotransferase) domain 1"/>
    <property type="match status" value="1"/>
</dbReference>
<dbReference type="InterPro" id="IPR006211">
    <property type="entry name" value="Furin-like_Cys-rich_dom"/>
</dbReference>
<dbReference type="InterPro" id="IPR006212">
    <property type="entry name" value="Furin_repeat"/>
</dbReference>
<dbReference type="InterPro" id="IPR032778">
    <property type="entry name" value="GF_recep_IV"/>
</dbReference>
<dbReference type="InterPro" id="IPR009030">
    <property type="entry name" value="Growth_fac_rcpt_cys_sf"/>
</dbReference>
<dbReference type="InterPro" id="IPR011009">
    <property type="entry name" value="Kinase-like_dom_sf"/>
</dbReference>
<dbReference type="InterPro" id="IPR000719">
    <property type="entry name" value="Prot_kinase_dom"/>
</dbReference>
<dbReference type="InterPro" id="IPR017441">
    <property type="entry name" value="Protein_kinase_ATP_BS"/>
</dbReference>
<dbReference type="InterPro" id="IPR000494">
    <property type="entry name" value="Rcpt_L-dom"/>
</dbReference>
<dbReference type="InterPro" id="IPR036941">
    <property type="entry name" value="Rcpt_L-dom_sf"/>
</dbReference>
<dbReference type="InterPro" id="IPR050122">
    <property type="entry name" value="RTK"/>
</dbReference>
<dbReference type="InterPro" id="IPR001245">
    <property type="entry name" value="Ser-Thr/Tyr_kinase_cat_dom"/>
</dbReference>
<dbReference type="InterPro" id="IPR008266">
    <property type="entry name" value="Tyr_kinase_AS"/>
</dbReference>
<dbReference type="InterPro" id="IPR020635">
    <property type="entry name" value="Tyr_kinase_cat_dom"/>
</dbReference>
<dbReference type="PANTHER" id="PTHR24416:SF566">
    <property type="entry name" value="EPIDERMAL GROWTH FACTOR RECEPTOR"/>
    <property type="match status" value="1"/>
</dbReference>
<dbReference type="PANTHER" id="PTHR24416">
    <property type="entry name" value="TYROSINE-PROTEIN KINASE RECEPTOR"/>
    <property type="match status" value="1"/>
</dbReference>
<dbReference type="Pfam" id="PF00757">
    <property type="entry name" value="Furin-like"/>
    <property type="match status" value="1"/>
</dbReference>
<dbReference type="Pfam" id="PF14843">
    <property type="entry name" value="GF_recep_IV"/>
    <property type="match status" value="1"/>
</dbReference>
<dbReference type="Pfam" id="PF07714">
    <property type="entry name" value="PK_Tyr_Ser-Thr"/>
    <property type="match status" value="1"/>
</dbReference>
<dbReference type="Pfam" id="PF01030">
    <property type="entry name" value="Recep_L_domain"/>
    <property type="match status" value="2"/>
</dbReference>
<dbReference type="PRINTS" id="PR00109">
    <property type="entry name" value="TYRKINASE"/>
</dbReference>
<dbReference type="SMART" id="SM00261">
    <property type="entry name" value="FU"/>
    <property type="match status" value="7"/>
</dbReference>
<dbReference type="SMART" id="SM00219">
    <property type="entry name" value="TyrKc"/>
    <property type="match status" value="1"/>
</dbReference>
<dbReference type="SUPFAM" id="SSF57184">
    <property type="entry name" value="Growth factor receptor domain"/>
    <property type="match status" value="3"/>
</dbReference>
<dbReference type="SUPFAM" id="SSF52058">
    <property type="entry name" value="L domain-like"/>
    <property type="match status" value="2"/>
</dbReference>
<dbReference type="SUPFAM" id="SSF56112">
    <property type="entry name" value="Protein kinase-like (PK-like)"/>
    <property type="match status" value="1"/>
</dbReference>
<dbReference type="PROSITE" id="PS00107">
    <property type="entry name" value="PROTEIN_KINASE_ATP"/>
    <property type="match status" value="1"/>
</dbReference>
<dbReference type="PROSITE" id="PS50011">
    <property type="entry name" value="PROTEIN_KINASE_DOM"/>
    <property type="match status" value="1"/>
</dbReference>
<dbReference type="PROSITE" id="PS00109">
    <property type="entry name" value="PROTEIN_KINASE_TYR"/>
    <property type="match status" value="1"/>
</dbReference>
<reference key="1">
    <citation type="journal article" date="1990" name="Nature">
        <title>The let-23 gene necessary for Caenorhabditis elegans vulval induction encodes a tyrosine kinase of the EGF receptor subfamily.</title>
        <authorList>
            <person name="Aroian R.V."/>
            <person name="Koga M."/>
            <person name="Mendel J.E."/>
            <person name="Ohshima Y."/>
            <person name="Sternberg P.W."/>
        </authorList>
    </citation>
    <scope>NUCLEOTIDE SEQUENCE [MRNA]</scope>
</reference>
<reference key="2">
    <citation type="journal article" date="1996" name="J. Mol. Biol.">
        <title>Genomic structure and 5' regulatory regions of the let-23 gene in the nematode C. elegans.</title>
        <authorList>
            <person name="Sakai T."/>
            <person name="Koga M."/>
            <person name="Ohshima Y."/>
        </authorList>
    </citation>
    <scope>NUCLEOTIDE SEQUENCE [GENOMIC DNA]</scope>
    <source>
        <strain>Bristol N2</strain>
    </source>
</reference>
<reference key="3">
    <citation type="journal article" date="1998" name="Science">
        <title>Genome sequence of the nematode C. elegans: a platform for investigating biology.</title>
        <authorList>
            <consortium name="The C. elegans sequencing consortium"/>
        </authorList>
    </citation>
    <scope>NUCLEOTIDE SEQUENCE [LARGE SCALE GENOMIC DNA]</scope>
    <source>
        <strain>Bristol N2</strain>
    </source>
</reference>
<reference key="4">
    <citation type="journal article" date="1991" name="Genetics">
        <title>Multiple functions of let-23, a Caenorhabditis elegans receptor tyrosine kinase gene required for vulval induction.</title>
        <authorList>
            <person name="Aroian R.V."/>
            <person name="Sternberg P.W."/>
        </authorList>
    </citation>
    <scope>FUNCTION</scope>
    <scope>DISRUPTION PHENOTYPE</scope>
    <scope>MUTAGENESIS OF CYS-368</scope>
</reference>
<reference key="5">
    <citation type="journal article" date="1994" name="EMBO J.">
        <title>Mutations in the Caenorhabditis elegans let-23 EGFR-like gene define elements important for cell-type specificity and function.</title>
        <authorList>
            <person name="Aroian R.V."/>
            <person name="Les G.M."/>
            <person name="Sternberg P.W."/>
        </authorList>
    </citation>
    <scope>FUNCTION</scope>
    <scope>MUTAGENESIS OF CYS-368; GLY-469; CYS-700; CYS-753; THR-1065 AND GLY-1074</scope>
</reference>
<reference key="6">
    <citation type="journal article" date="1998" name="Cell">
        <title>Inositol trisphosphate mediates a RAS-independent response to LET-23 receptor tyrosine kinase activation in C. elegans.</title>
        <authorList>
            <person name="Clandinin T.R."/>
            <person name="DeModena J.A."/>
            <person name="Sternberg P.W."/>
        </authorList>
    </citation>
    <scope>FUNCTION</scope>
    <scope>MUTAGENESIS OF THR-1065</scope>
</reference>
<reference key="7">
    <citation type="journal article" date="1999" name="Mol. Biol. Cell">
        <title>Basolateral localization of the Caenorhabditis elegans epidermal growth factor receptor in epithelial cells by the PDZ protein lin-10.</title>
        <authorList>
            <person name="Whitfield C.W."/>
            <person name="Benard C."/>
            <person name="Barnes T."/>
            <person name="Hekimi S."/>
            <person name="Kim S.K."/>
        </authorList>
    </citation>
    <scope>SUBCELLULAR LOCATION</scope>
    <scope>TISSUE SPECIFICITY</scope>
    <scope>DEVELOPMENTAL STAGE</scope>
    <source>
        <strain>Bristol N2</strain>
    </source>
</reference>
<reference key="8">
    <citation type="journal article" date="2004" name="Mol. Biol. Cell">
        <title>Inositol 1,4,5-trisphosphate signaling regulates rhythmic contractile activity of myoepithelial sheath cells in Caenorhabditis elegans.</title>
        <authorList>
            <person name="Yin X."/>
            <person name="Gower N.J."/>
            <person name="Baylis H.A."/>
            <person name="Strange K."/>
        </authorList>
    </citation>
    <scope>FUNCTION</scope>
    <scope>DISRUPTION PHENOTYPE</scope>
    <scope>MUTAGENESIS OF CYS-368</scope>
</reference>
<reference key="9">
    <citation type="journal article" date="2007" name="Mol. Cell. Proteomics">
        <title>Proteomics reveals N-linked glycoprotein diversity in Caenorhabditis elegans and suggests an atypical translocation mechanism for integral membrane proteins.</title>
        <authorList>
            <person name="Kaji H."/>
            <person name="Kamiie J."/>
            <person name="Kawakami H."/>
            <person name="Kido K."/>
            <person name="Yamauchi Y."/>
            <person name="Shinkawa T."/>
            <person name="Taoka M."/>
            <person name="Takahashi N."/>
            <person name="Isobe T."/>
        </authorList>
    </citation>
    <scope>GLYCOSYLATION [LARGE SCALE ANALYSIS] AT ASN-376</scope>
    <scope>IDENTIFICATION BY MASS SPECTROMETRY</scope>
    <source>
        <strain>Bristol N2</strain>
    </source>
</reference>
<reference key="10">
    <citation type="journal article" date="2007" name="Nat. Neurosci.">
        <title>Epidermal growth factor signaling induces behavioral quiescence in Caenorhabditis elegans.</title>
        <authorList>
            <person name="Van Buskirk C."/>
            <person name="Sternberg P.W."/>
        </authorList>
    </citation>
    <scope>FUNCTION</scope>
    <scope>DISRUPTION PHENOTYPE</scope>
</reference>
<reference key="11">
    <citation type="journal article" date="2010" name="Dev. Biol.">
        <title>A strawberry notch homolog, let-765/nsh-1, positively regulates lin-3/egf expression to promote RAS-dependent vulval induction in C. elegans.</title>
        <authorList>
            <person name="Simms C.L."/>
            <person name="Baillie D.L."/>
        </authorList>
    </citation>
    <scope>FUNCTION</scope>
    <scope>MUTAGENESIS OF CYS-364</scope>
</reference>
<reference key="12">
    <citation type="journal article" date="2016" name="Dev. Biol.">
        <title>The SWI/SNF chromatin remodeling complex exerts both negative and positive control over LET-23/EGFR-dependent vulval induction in Caenorhabditis elegans.</title>
        <authorList>
            <person name="Flibotte S."/>
            <person name="Kim B.R."/>
            <person name="Van de Laar E."/>
            <person name="Brown L."/>
            <person name="Moghal N."/>
        </authorList>
    </citation>
    <scope>MUTAGENESIS OF CYS-364 AND 1318-GLN--LEU-1323</scope>
</reference>
<reference key="13">
    <citation type="journal article" date="2020" name="Elife">
        <title>The CHORD protein CHP-1 regulates EGF receptor trafficking and signaling in C. elegans and in human cells.</title>
        <authorList>
            <person name="Haag A."/>
            <person name="Walser M."/>
            <person name="Henggeler A."/>
            <person name="Hajnal A."/>
        </authorList>
    </citation>
    <scope>FUNCTION</scope>
    <scope>SUBCELLULAR LOCATION</scope>
    <scope>DEVELOPMENTAL STAGE</scope>
    <scope>MUTAGENESIS OF 1318-GLN--LEU-1323</scope>
</reference>
<keyword id="KW-0002">3D-structure</keyword>
<keyword id="KW-0067">ATP-binding</keyword>
<keyword id="KW-1003">Cell membrane</keyword>
<keyword id="KW-0217">Developmental protein</keyword>
<keyword id="KW-1015">Disulfide bond</keyword>
<keyword id="KW-0325">Glycoprotein</keyword>
<keyword id="KW-0418">Kinase</keyword>
<keyword id="KW-0472">Membrane</keyword>
<keyword id="KW-0547">Nucleotide-binding</keyword>
<keyword id="KW-0597">Phosphoprotein</keyword>
<keyword id="KW-0675">Receptor</keyword>
<keyword id="KW-1185">Reference proteome</keyword>
<keyword id="KW-0732">Signal</keyword>
<keyword id="KW-0808">Transferase</keyword>
<keyword id="KW-0812">Transmembrane</keyword>
<keyword id="KW-1133">Transmembrane helix</keyword>
<keyword id="KW-0829">Tyrosine-protein kinase</keyword>
<feature type="signal peptide" evidence="2">
    <location>
        <begin position="1"/>
        <end position="20"/>
    </location>
</feature>
<feature type="chain" id="PRO_0000016677" description="Receptor tyrosine-protein kinase let-23">
    <location>
        <begin position="21"/>
        <end position="1323"/>
    </location>
</feature>
<feature type="topological domain" description="Extracellular" evidence="2">
    <location>
        <begin position="21"/>
        <end position="818"/>
    </location>
</feature>
<feature type="transmembrane region" description="Helical" evidence="2">
    <location>
        <begin position="819"/>
        <end position="839"/>
    </location>
</feature>
<feature type="topological domain" description="Cytoplasmic" evidence="2">
    <location>
        <begin position="840"/>
        <end position="1323"/>
    </location>
</feature>
<feature type="domain" description="Protein kinase" evidence="3">
    <location>
        <begin position="885"/>
        <end position="1152"/>
    </location>
</feature>
<feature type="region of interest" description="Disordered" evidence="5">
    <location>
        <begin position="1265"/>
        <end position="1323"/>
    </location>
</feature>
<feature type="compositionally biased region" description="Polar residues" evidence="5">
    <location>
        <begin position="1265"/>
        <end position="1289"/>
    </location>
</feature>
<feature type="compositionally biased region" description="Basic and acidic residues" evidence="5">
    <location>
        <begin position="1293"/>
        <end position="1302"/>
    </location>
</feature>
<feature type="compositionally biased region" description="Acidic residues" evidence="5">
    <location>
        <begin position="1303"/>
        <end position="1315"/>
    </location>
</feature>
<feature type="active site" description="Proton acceptor" evidence="3 4">
    <location>
        <position position="1010"/>
    </location>
</feature>
<feature type="binding site" evidence="3">
    <location>
        <begin position="891"/>
        <end position="899"/>
    </location>
    <ligand>
        <name>ATP</name>
        <dbReference type="ChEBI" id="CHEBI:30616"/>
    </ligand>
</feature>
<feature type="binding site" evidence="3">
    <location>
        <position position="919"/>
    </location>
    <ligand>
        <name>ATP</name>
        <dbReference type="ChEBI" id="CHEBI:30616"/>
    </ligand>
</feature>
<feature type="glycosylation site" description="N-linked (GlcNAc...) asparagine" evidence="2">
    <location>
        <position position="91"/>
    </location>
</feature>
<feature type="glycosylation site" description="N-linked (GlcNAc...) asparagine" evidence="2">
    <location>
        <position position="169"/>
    </location>
</feature>
<feature type="glycosylation site" description="N-linked (GlcNAc...) asparagine" evidence="2">
    <location>
        <position position="255"/>
    </location>
</feature>
<feature type="glycosylation site" description="N-linked (GlcNAc...) asparagine" evidence="8">
    <location>
        <position position="376"/>
    </location>
</feature>
<feature type="glycosylation site" description="N-linked (GlcNAc...) asparagine" evidence="2">
    <location>
        <position position="561"/>
    </location>
</feature>
<feature type="glycosylation site" description="N-linked (GlcNAc...) asparagine" evidence="2">
    <location>
        <position position="655"/>
    </location>
</feature>
<feature type="glycosylation site" description="N-linked (GlcNAc...) asparagine" evidence="2">
    <location>
        <position position="746"/>
    </location>
</feature>
<feature type="glycosylation site" description="N-linked (GlcNAc...) asparagine" evidence="2">
    <location>
        <position position="776"/>
    </location>
</feature>
<feature type="disulfide bond" evidence="1">
    <location>
        <begin position="220"/>
        <end position="228"/>
    </location>
</feature>
<feature type="disulfide bond" evidence="1">
    <location>
        <begin position="224"/>
        <end position="236"/>
    </location>
</feature>
<feature type="disulfide bond" evidence="1">
    <location>
        <begin position="244"/>
        <end position="251"/>
    </location>
</feature>
<feature type="disulfide bond" evidence="1">
    <location>
        <begin position="248"/>
        <end position="262"/>
    </location>
</feature>
<feature type="disulfide bond" evidence="1">
    <location>
        <begin position="263"/>
        <end position="271"/>
    </location>
</feature>
<feature type="disulfide bond" evidence="1">
    <location>
        <begin position="267"/>
        <end position="279"/>
    </location>
</feature>
<feature type="disulfide bond" evidence="1">
    <location>
        <begin position="282"/>
        <end position="291"/>
    </location>
</feature>
<feature type="disulfide bond" evidence="1">
    <location>
        <begin position="295"/>
        <end position="322"/>
    </location>
</feature>
<feature type="disulfide bond" evidence="1">
    <location>
        <begin position="326"/>
        <end position="337"/>
    </location>
</feature>
<feature type="disulfide bond" evidence="1">
    <location>
        <begin position="341"/>
        <end position="356"/>
    </location>
</feature>
<feature type="disulfide bond" evidence="1">
    <location>
        <begin position="359"/>
        <end position="364"/>
    </location>
</feature>
<feature type="disulfide bond" evidence="1">
    <location>
        <begin position="520"/>
        <end position="529"/>
    </location>
</feature>
<feature type="disulfide bond" evidence="1">
    <location>
        <begin position="524"/>
        <end position="537"/>
    </location>
</feature>
<feature type="disulfide bond" evidence="1">
    <location>
        <begin position="540"/>
        <end position="549"/>
    </location>
</feature>
<feature type="disulfide bond" evidence="1">
    <location>
        <begin position="553"/>
        <end position="567"/>
    </location>
</feature>
<feature type="disulfide bond" evidence="1">
    <location>
        <begin position="570"/>
        <end position="577"/>
    </location>
</feature>
<feature type="disulfide bond" evidence="1">
    <location>
        <begin position="574"/>
        <end position="585"/>
    </location>
</feature>
<feature type="disulfide bond" evidence="1">
    <location>
        <begin position="588"/>
        <end position="604"/>
    </location>
</feature>
<feature type="disulfide bond" evidence="1">
    <location>
        <begin position="608"/>
        <end position="620"/>
    </location>
</feature>
<feature type="disulfide bond" evidence="1">
    <location>
        <begin position="623"/>
        <end position="632"/>
    </location>
</feature>
<feature type="disulfide bond" evidence="1">
    <location>
        <begin position="627"/>
        <end position="644"/>
    </location>
</feature>
<feature type="disulfide bond" evidence="2">
    <location>
        <begin position="647"/>
        <end position="660"/>
    </location>
</feature>
<feature type="disulfide bond" evidence="2">
    <location>
        <begin position="670"/>
        <end position="693"/>
    </location>
</feature>
<feature type="disulfide bond" evidence="2">
    <location>
        <begin position="696"/>
        <end position="703"/>
    </location>
</feature>
<feature type="disulfide bond" evidence="2">
    <location>
        <begin position="700"/>
        <end position="715"/>
    </location>
</feature>
<feature type="disulfide bond" evidence="2">
    <location>
        <begin position="717"/>
        <end position="731"/>
    </location>
</feature>
<feature type="disulfide bond" evidence="2">
    <location>
        <begin position="735"/>
        <end position="750"/>
    </location>
</feature>
<feature type="disulfide bond" evidence="2">
    <location>
        <begin position="753"/>
        <end position="763"/>
    </location>
</feature>
<feature type="disulfide bond" evidence="2">
    <location>
        <begin position="757"/>
        <end position="771"/>
    </location>
</feature>
<feature type="disulfide bond" evidence="2">
    <location>
        <begin position="774"/>
        <end position="787"/>
    </location>
</feature>
<feature type="disulfide bond" evidence="2">
    <location>
        <begin position="791"/>
        <end position="805"/>
    </location>
</feature>
<feature type="mutagenesis site" description="In sa62; multivulva phenotype. RNAi-mediated knockdown of let-765 suppresses the multivulva phenotype. Multivulva phenotype enhanced in a swsn-4 (sy598) mutant background." evidence="10 12">
    <original>C</original>
    <variation>Y</variation>
    <location>
        <position position="364"/>
    </location>
</feature>
<feature type="mutagenesis site" description="In sy10; severe larval lethality, lack of vulva induction, infertile and lack of male spicule formation. Impaired ovulation characterized by a delay in the initiation of ovulatory sheath cell contractions and prolonged ovulatory contractions." evidence="7 11 14">
    <original>C</original>
    <variation>Y</variation>
    <location>
        <position position="368"/>
    </location>
</feature>
<feature type="mutagenesis site" description="In mn216; larval lethality." evidence="14">
    <original>G</original>
    <variation>R</variation>
    <location>
        <position position="469"/>
    </location>
</feature>
<feature type="mutagenesis site" description="In mn23; larval lethality." evidence="14">
    <original>C</original>
    <variation>W</variation>
    <location>
        <position position="700"/>
    </location>
</feature>
<feature type="mutagenesis site" description="In SY11." evidence="14">
    <original>C</original>
    <variation>Y</variation>
    <location>
        <position position="753"/>
    </location>
</feature>
<feature type="mutagenesis site" description="In sy16; larval lethality and lack of vulva induction. Viability, vulva induction but not fertility are restored in a let-60 (n1046gf) mutant background. Viability is not restored in a lfe-1 (sy290) or lfe-2 (sy326) mutant background. Fertility is restored in a let-60 (n1046gf) and lfe-1 (sy290) mutant background." evidence="14 15">
    <original>T</original>
    <variation>I</variation>
    <location>
        <position position="1065"/>
    </location>
</feature>
<feature type="mutagenesis site" description="In SY7." evidence="14">
    <original>G</original>
    <variation>E</variation>
    <location>
        <position position="1074"/>
    </location>
</feature>
<feature type="mutagenesis site" description="In sy1; reduces vulval induction. The vulval induction incidence is further reduced in a chp-1 tm2277 mutant background and in swsn-4 (os13) and swsn-1 (os22) mutant backgrounds." evidence="12 13">
    <location>
        <begin position="1318"/>
        <end position="1323"/>
    </location>
</feature>
<feature type="sequence conflict" description="In Ref. 1; CAA40919." evidence="16" ref="1">
    <original>D</original>
    <variation>H</variation>
    <location>
        <position position="1179"/>
    </location>
</feature>
<feature type="helix" evidence="18">
    <location>
        <begin position="880"/>
        <end position="882"/>
    </location>
</feature>
<feature type="strand" evidence="18">
    <location>
        <begin position="883"/>
        <end position="892"/>
    </location>
</feature>
<feature type="strand" evidence="18">
    <location>
        <begin position="898"/>
        <end position="904"/>
    </location>
</feature>
<feature type="strand" evidence="18">
    <location>
        <begin position="914"/>
        <end position="921"/>
    </location>
</feature>
<feature type="helix" evidence="18">
    <location>
        <begin position="929"/>
        <end position="939"/>
    </location>
</feature>
<feature type="strand" evidence="18">
    <location>
        <begin position="949"/>
        <end position="954"/>
    </location>
</feature>
<feature type="strand" evidence="18">
    <location>
        <begin position="959"/>
        <end position="964"/>
    </location>
</feature>
<feature type="helix" evidence="18">
    <location>
        <begin position="971"/>
        <end position="977"/>
    </location>
</feature>
<feature type="turn" evidence="18">
    <location>
        <begin position="978"/>
        <end position="981"/>
    </location>
</feature>
<feature type="helix" evidence="18">
    <location>
        <begin position="984"/>
        <end position="1003"/>
    </location>
</feature>
<feature type="helix" evidence="18">
    <location>
        <begin position="1013"/>
        <end position="1015"/>
    </location>
</feature>
<feature type="strand" evidence="18">
    <location>
        <begin position="1016"/>
        <end position="1020"/>
    </location>
</feature>
<feature type="strand" evidence="18">
    <location>
        <begin position="1023"/>
        <end position="1026"/>
    </location>
</feature>
<feature type="turn" evidence="18">
    <location>
        <begin position="1032"/>
        <end position="1034"/>
    </location>
</feature>
<feature type="helix" evidence="18">
    <location>
        <begin position="1049"/>
        <end position="1053"/>
    </location>
</feature>
<feature type="helix" evidence="18">
    <location>
        <begin position="1056"/>
        <end position="1060"/>
    </location>
</feature>
<feature type="helix" evidence="18">
    <location>
        <begin position="1066"/>
        <end position="1081"/>
    </location>
</feature>
<feature type="turn" evidence="18">
    <location>
        <begin position="1087"/>
        <end position="1090"/>
    </location>
</feature>
<feature type="helix" evidence="18">
    <location>
        <begin position="1095"/>
        <end position="1101"/>
    </location>
</feature>
<feature type="helix" evidence="18">
    <location>
        <begin position="1114"/>
        <end position="1122"/>
    </location>
</feature>
<feature type="turn" evidence="18">
    <location>
        <begin position="1128"/>
        <end position="1130"/>
    </location>
</feature>
<feature type="helix" evidence="18">
    <location>
        <begin position="1134"/>
        <end position="1144"/>
    </location>
</feature>
<feature type="helix" evidence="18">
    <location>
        <begin position="1148"/>
        <end position="1150"/>
    </location>
</feature>
<feature type="helix" evidence="18">
    <location>
        <begin position="1160"/>
        <end position="1177"/>
    </location>
</feature>
<feature type="turn" evidence="18">
    <location>
        <begin position="1178"/>
        <end position="1180"/>
    </location>
</feature>
<feature type="helix" evidence="18">
    <location>
        <begin position="1184"/>
        <end position="1189"/>
    </location>
</feature>
<name>LET23_CAEEL</name>
<sequence length="1323" mass="150511">MRYPPSIGSILLIIPIFLTFFGNSNAQLWKRCVSPQDCLCSGTTNGISRYGTGNILEDLETMYRGCRRVYGNLEITWIEANEIKKWRESTNSTVDPKNEDSPLKSINFFDNLEEIRGSLIIYRANIQKISFPRLRVIYGDEVFHDNALYIHKNDKVHEVVMRELRVIRNGSVTIQDNPKMCYIGDKIDWKELLYDPDVQKVETTNSHQHCYQNGKSMAKCHESCNDKCWGSGDNDCQRVYRSVCPKSCSQCFYSNSTSSYECCDSACLGGCTGHGPKNCIACSKYELDGICIETCPSRKIFNHKTGRLVFNPDGRYQNGNHCVKECPPELLIENDVCVRHCSDGHHYDATKDVRECEKCRSSSCPKICTVDGHLTNETLKNLEGCEQIDGHLIIEHAFTYEQLKVLETVKIVSEYITIVQQNFYDLKFLKNLQIIEGRKLHNVRWALAIYQCDDLEELSLNSLKLIKTGAVLIMKNHRLCYVSKIDWSSIITSKGKDNKPSLAIAENRDSKLCETEQRVCDKNCNKRGCWGKEPEDCLECKTWKSVGTCVEKCDTKGFLRNQTSMKCERCSPECETCNGLGELDCLTCRHKTLYNSDFGNRMECVHDCPVSHFPTQKNVCEKCHPTCYDNGCTGPDSNLGYGGCKQCKYAVKYENDTIFCLQSSGMNNVCVENDLPNYYISTYDTEGVIETHCEKCSISCKTCSSAGRNVVQNKCVCKHVEYQPNPSERICMDQCPVNSFMVPDTNNTVCKKCHHECDQNYHCANGQSTGCQKCKNFTVFKGDIAQCVSECPKNLPFSNPANGECLDYDIASRQRKTRMVIIGSVLFGFAVMFLFILLVYWRCQRIGKKLKIAEMVDMPELTPIDASVRPNMSRICLIPSSELQTKLDKKLGAGAFGTVFAGIYYPKRAKNVKIPVAIKVFQTDQSQTDEMLEEATNMFRLRHDNLLKIIGFCMHDDGLKIVTIYRPLGNLQNFLKLHKENLGAREQVLYCYQIASGMQYLEKQRVVHRDLATRNVLVKKFNHVEITDFGLSKILKHDADSITIKSGKVAIKWLAIEIFSKHCYTHASDVWAFGVTCWEIITFGQSPYQGMSTDSIHNFLKDGNRLSQPPNCSQDLYQELLRCWMADPKSRPGFEILYERFKEFCKVPQLFLENSNKISESDLSAEERFQTERIREMFDGNIDPQMYFDQGSLPSMPSSPTSMATFTIPHGDLMNRMQSVNSSRYKTEPFDYGSTAQEDNSYLIPKTKEVQQSAVLYTAVTNEDGQTELSPSNGDYYNQPNTPSSSSGYYNEPHLKTKKPETSEEAEAVQYENEEVSQKETCL</sequence>
<evidence type="ECO:0000250" key="1"/>
<evidence type="ECO:0000255" key="2"/>
<evidence type="ECO:0000255" key="3">
    <source>
        <dbReference type="PROSITE-ProRule" id="PRU00159"/>
    </source>
</evidence>
<evidence type="ECO:0000255" key="4">
    <source>
        <dbReference type="PROSITE-ProRule" id="PRU10028"/>
    </source>
</evidence>
<evidence type="ECO:0000256" key="5">
    <source>
        <dbReference type="SAM" id="MobiDB-lite"/>
    </source>
</evidence>
<evidence type="ECO:0000269" key="6">
    <source>
    </source>
</evidence>
<evidence type="ECO:0000269" key="7">
    <source>
    </source>
</evidence>
<evidence type="ECO:0000269" key="8">
    <source>
    </source>
</evidence>
<evidence type="ECO:0000269" key="9">
    <source>
    </source>
</evidence>
<evidence type="ECO:0000269" key="10">
    <source>
    </source>
</evidence>
<evidence type="ECO:0000269" key="11">
    <source>
    </source>
</evidence>
<evidence type="ECO:0000269" key="12">
    <source>
    </source>
</evidence>
<evidence type="ECO:0000269" key="13">
    <source>
    </source>
</evidence>
<evidence type="ECO:0000269" key="14">
    <source>
    </source>
</evidence>
<evidence type="ECO:0000269" key="15">
    <source>
    </source>
</evidence>
<evidence type="ECO:0000305" key="16"/>
<evidence type="ECO:0000312" key="17">
    <source>
        <dbReference type="WormBase" id="ZK1067.1a"/>
    </source>
</evidence>
<evidence type="ECO:0007829" key="18">
    <source>
        <dbReference type="PDB" id="5WNO"/>
    </source>
</evidence>
<proteinExistence type="evidence at protein level"/>